<dbReference type="EMBL" id="AM942759">
    <property type="protein sequence ID" value="CAR45502.1"/>
    <property type="molecule type" value="Genomic_DNA"/>
</dbReference>
<dbReference type="RefSeq" id="WP_004246903.1">
    <property type="nucleotide sequence ID" value="NC_010554.1"/>
</dbReference>
<dbReference type="SMR" id="B4EYV2"/>
<dbReference type="EnsemblBacteria" id="CAR45502">
    <property type="protein sequence ID" value="CAR45502"/>
    <property type="gene ID" value="PMI2788"/>
</dbReference>
<dbReference type="GeneID" id="6800539"/>
<dbReference type="KEGG" id="pmr:PMI2788"/>
<dbReference type="eggNOG" id="COG0081">
    <property type="taxonomic scope" value="Bacteria"/>
</dbReference>
<dbReference type="HOGENOM" id="CLU_062853_0_0_6"/>
<dbReference type="Proteomes" id="UP000008319">
    <property type="component" value="Chromosome"/>
</dbReference>
<dbReference type="GO" id="GO:0022625">
    <property type="term" value="C:cytosolic large ribosomal subunit"/>
    <property type="evidence" value="ECO:0007669"/>
    <property type="project" value="TreeGrafter"/>
</dbReference>
<dbReference type="GO" id="GO:0019843">
    <property type="term" value="F:rRNA binding"/>
    <property type="evidence" value="ECO:0007669"/>
    <property type="project" value="UniProtKB-UniRule"/>
</dbReference>
<dbReference type="GO" id="GO:0003735">
    <property type="term" value="F:structural constituent of ribosome"/>
    <property type="evidence" value="ECO:0007669"/>
    <property type="project" value="InterPro"/>
</dbReference>
<dbReference type="GO" id="GO:0000049">
    <property type="term" value="F:tRNA binding"/>
    <property type="evidence" value="ECO:0007669"/>
    <property type="project" value="UniProtKB-KW"/>
</dbReference>
<dbReference type="GO" id="GO:0006417">
    <property type="term" value="P:regulation of translation"/>
    <property type="evidence" value="ECO:0007669"/>
    <property type="project" value="UniProtKB-KW"/>
</dbReference>
<dbReference type="GO" id="GO:0006412">
    <property type="term" value="P:translation"/>
    <property type="evidence" value="ECO:0007669"/>
    <property type="project" value="UniProtKB-UniRule"/>
</dbReference>
<dbReference type="CDD" id="cd00403">
    <property type="entry name" value="Ribosomal_L1"/>
    <property type="match status" value="1"/>
</dbReference>
<dbReference type="FunFam" id="3.40.50.790:FF:000001">
    <property type="entry name" value="50S ribosomal protein L1"/>
    <property type="match status" value="1"/>
</dbReference>
<dbReference type="Gene3D" id="3.30.190.20">
    <property type="match status" value="1"/>
</dbReference>
<dbReference type="Gene3D" id="3.40.50.790">
    <property type="match status" value="1"/>
</dbReference>
<dbReference type="HAMAP" id="MF_01318_B">
    <property type="entry name" value="Ribosomal_uL1_B"/>
    <property type="match status" value="1"/>
</dbReference>
<dbReference type="InterPro" id="IPR005878">
    <property type="entry name" value="Ribosom_uL1_bac-type"/>
</dbReference>
<dbReference type="InterPro" id="IPR002143">
    <property type="entry name" value="Ribosomal_uL1"/>
</dbReference>
<dbReference type="InterPro" id="IPR023674">
    <property type="entry name" value="Ribosomal_uL1-like"/>
</dbReference>
<dbReference type="InterPro" id="IPR028364">
    <property type="entry name" value="Ribosomal_uL1/biogenesis"/>
</dbReference>
<dbReference type="InterPro" id="IPR016095">
    <property type="entry name" value="Ribosomal_uL1_3-a/b-sand"/>
</dbReference>
<dbReference type="InterPro" id="IPR023673">
    <property type="entry name" value="Ribosomal_uL1_CS"/>
</dbReference>
<dbReference type="NCBIfam" id="TIGR01169">
    <property type="entry name" value="rplA_bact"/>
    <property type="match status" value="1"/>
</dbReference>
<dbReference type="PANTHER" id="PTHR36427">
    <property type="entry name" value="54S RIBOSOMAL PROTEIN L1, MITOCHONDRIAL"/>
    <property type="match status" value="1"/>
</dbReference>
<dbReference type="PANTHER" id="PTHR36427:SF3">
    <property type="entry name" value="LARGE RIBOSOMAL SUBUNIT PROTEIN UL1M"/>
    <property type="match status" value="1"/>
</dbReference>
<dbReference type="Pfam" id="PF00687">
    <property type="entry name" value="Ribosomal_L1"/>
    <property type="match status" value="1"/>
</dbReference>
<dbReference type="PIRSF" id="PIRSF002155">
    <property type="entry name" value="Ribosomal_L1"/>
    <property type="match status" value="1"/>
</dbReference>
<dbReference type="SUPFAM" id="SSF56808">
    <property type="entry name" value="Ribosomal protein L1"/>
    <property type="match status" value="1"/>
</dbReference>
<dbReference type="PROSITE" id="PS01199">
    <property type="entry name" value="RIBOSOMAL_L1"/>
    <property type="match status" value="1"/>
</dbReference>
<reference key="1">
    <citation type="journal article" date="2008" name="J. Bacteriol.">
        <title>Complete genome sequence of uropathogenic Proteus mirabilis, a master of both adherence and motility.</title>
        <authorList>
            <person name="Pearson M.M."/>
            <person name="Sebaihia M."/>
            <person name="Churcher C."/>
            <person name="Quail M.A."/>
            <person name="Seshasayee A.S."/>
            <person name="Luscombe N.M."/>
            <person name="Abdellah Z."/>
            <person name="Arrosmith C."/>
            <person name="Atkin B."/>
            <person name="Chillingworth T."/>
            <person name="Hauser H."/>
            <person name="Jagels K."/>
            <person name="Moule S."/>
            <person name="Mungall K."/>
            <person name="Norbertczak H."/>
            <person name="Rabbinowitsch E."/>
            <person name="Walker D."/>
            <person name="Whithead S."/>
            <person name="Thomson N.R."/>
            <person name="Rather P.N."/>
            <person name="Parkhill J."/>
            <person name="Mobley H.L.T."/>
        </authorList>
    </citation>
    <scope>NUCLEOTIDE SEQUENCE [LARGE SCALE GENOMIC DNA]</scope>
    <source>
        <strain>HI4320</strain>
    </source>
</reference>
<protein>
    <recommendedName>
        <fullName evidence="1">Large ribosomal subunit protein uL1</fullName>
    </recommendedName>
    <alternativeName>
        <fullName evidence="2">50S ribosomal protein L1</fullName>
    </alternativeName>
</protein>
<proteinExistence type="inferred from homology"/>
<organism>
    <name type="scientific">Proteus mirabilis (strain HI4320)</name>
    <dbReference type="NCBI Taxonomy" id="529507"/>
    <lineage>
        <taxon>Bacteria</taxon>
        <taxon>Pseudomonadati</taxon>
        <taxon>Pseudomonadota</taxon>
        <taxon>Gammaproteobacteria</taxon>
        <taxon>Enterobacterales</taxon>
        <taxon>Morganellaceae</taxon>
        <taxon>Proteus</taxon>
    </lineage>
</organism>
<name>RL1_PROMH</name>
<gene>
    <name evidence="1" type="primary">rplA</name>
    <name type="ordered locus">PMI2788</name>
</gene>
<sequence length="233" mass="24586">MAKLTKRMRNIREKVDVVKQYEINEAVALLKELATAKFVESVDVAVNLGIDARKSDQNVRGATVLPHGTGRSVRVAVFAQGANAEAAKEAGAELVGMDDLAAKVKAGEMDFDVVIASPDAMRVVGQLGQILGPRGLMPNPKVGTVTPNVAEAVKNAKAGQVRYRNDKNGIIHTTIGKVDFNEAQLKENLEALLVALKKAKPSSAKGVYIKKVSLSTTMGAGVAIDQASLSATV</sequence>
<accession>B4EYV2</accession>
<keyword id="KW-1185">Reference proteome</keyword>
<keyword id="KW-0678">Repressor</keyword>
<keyword id="KW-0687">Ribonucleoprotein</keyword>
<keyword id="KW-0689">Ribosomal protein</keyword>
<keyword id="KW-0694">RNA-binding</keyword>
<keyword id="KW-0699">rRNA-binding</keyword>
<keyword id="KW-0810">Translation regulation</keyword>
<keyword id="KW-0820">tRNA-binding</keyword>
<evidence type="ECO:0000255" key="1">
    <source>
        <dbReference type="HAMAP-Rule" id="MF_01318"/>
    </source>
</evidence>
<evidence type="ECO:0000305" key="2"/>
<comment type="function">
    <text evidence="1">Binds directly to 23S rRNA. The L1 stalk is quite mobile in the ribosome, and is involved in E site tRNA release.</text>
</comment>
<comment type="function">
    <text evidence="1">Protein L1 is also a translational repressor protein, it controls the translation of the L11 operon by binding to its mRNA.</text>
</comment>
<comment type="subunit">
    <text evidence="1">Part of the 50S ribosomal subunit.</text>
</comment>
<comment type="similarity">
    <text evidence="1">Belongs to the universal ribosomal protein uL1 family.</text>
</comment>
<feature type="chain" id="PRO_1000141444" description="Large ribosomal subunit protein uL1">
    <location>
        <begin position="1"/>
        <end position="233"/>
    </location>
</feature>